<proteinExistence type="evidence at transcript level"/>
<dbReference type="EC" id="3.5.-.-" evidence="8"/>
<dbReference type="EMBL" id="KU946987">
    <property type="protein sequence ID" value="AMY15067.1"/>
    <property type="molecule type" value="Genomic_DNA"/>
</dbReference>
<dbReference type="SMR" id="A0A3G1DJI3"/>
<dbReference type="GlyCosmos" id="A0A3G1DJI3">
    <property type="glycosylation" value="6 sites, No reported glycans"/>
</dbReference>
<dbReference type="GO" id="GO:0016787">
    <property type="term" value="F:hydrolase activity"/>
    <property type="evidence" value="ECO:0007669"/>
    <property type="project" value="UniProtKB-KW"/>
</dbReference>
<dbReference type="Gene3D" id="3.40.710.10">
    <property type="entry name" value="DD-peptidase/beta-lactamase superfamily"/>
    <property type="match status" value="1"/>
</dbReference>
<dbReference type="InterPro" id="IPR001466">
    <property type="entry name" value="Beta-lactam-related"/>
</dbReference>
<dbReference type="InterPro" id="IPR012338">
    <property type="entry name" value="Beta-lactam/transpept-like"/>
</dbReference>
<dbReference type="InterPro" id="IPR051478">
    <property type="entry name" value="Beta-lactamase-like_AB/R"/>
</dbReference>
<dbReference type="PANTHER" id="PTHR22935:SF95">
    <property type="entry name" value="BETA-LACTAMASE-LIKE 1-RELATED"/>
    <property type="match status" value="1"/>
</dbReference>
<dbReference type="PANTHER" id="PTHR22935">
    <property type="entry name" value="PENICILLIN-BINDING PROTEIN"/>
    <property type="match status" value="1"/>
</dbReference>
<dbReference type="Pfam" id="PF00144">
    <property type="entry name" value="Beta-lactamase"/>
    <property type="match status" value="1"/>
</dbReference>
<dbReference type="SUPFAM" id="SSF56601">
    <property type="entry name" value="beta-lactamase/transpeptidase-like"/>
    <property type="match status" value="1"/>
</dbReference>
<sequence>MRFTSTILLRVAVLLSLGGGSQTTSCTPGQPFPIPAYSKTSLQQTFEQIFETVSRSFDNESFHSTNVAIEVTSSQETLWSFYHAAKNQSSQDGSTVIGPDTVFRVARVSKLLTAIAILQLHDQGHISSLYDPINIYIPDLDPSTVQWGRITIWDLLNNVAGILDMYGYADIYTDFSARQRADLNLPPVPEDSLEGMPACQVDKSIPCDSAGLLSWLRSSRAVFEPHRINSNSNVGFSLLGILIERITGIDYERFISQTLIEPLHLNSTSFRPPHKNSGAVLQNDHTWNWDVGVNNPSVGLYSTPRDISTLLRWTLNESPSSLLNWFAPGFYAVGSHSLIGMPWNIFRTTAPLSIPNRPTTFNTVVGTLGPYTSVVVVMPEYDLAVSLMMNGALGHPHDILAKVTFPLVRAADKIALEKVRDNYAGTYKAEPRQKINSSITLSVSPDHGLYISELISNGSSILPVMERLASSKSGGGSNWIFQAVPTFLETKRRRTPHDRVVVNEEWRWTYVLDKPPGEGWNDWCLSSFDPVTYAGEPLTKMVFQKDAKSGRVLSVALSGYNITLPKGVQEAGIFAQLEGTSLDLHAQAGQEVLAG</sequence>
<evidence type="ECO:0000250" key="1">
    <source>
        <dbReference type="UniProtKB" id="A0A345BJP5"/>
    </source>
</evidence>
<evidence type="ECO:0000255" key="2"/>
<evidence type="ECO:0000255" key="3">
    <source>
        <dbReference type="PROSITE-ProRule" id="PRU00498"/>
    </source>
</evidence>
<evidence type="ECO:0000269" key="4">
    <source>
    </source>
</evidence>
<evidence type="ECO:0000269" key="5">
    <source>
    </source>
</evidence>
<evidence type="ECO:0000269" key="6">
    <source>
    </source>
</evidence>
<evidence type="ECO:0000269" key="7">
    <source>
    </source>
</evidence>
<evidence type="ECO:0000303" key="8">
    <source>
    </source>
</evidence>
<evidence type="ECO:0000305" key="9"/>
<evidence type="ECO:0000305" key="10">
    <source>
    </source>
</evidence>
<comment type="function">
    <text evidence="1 4 5 6 7 10">Probable hydrolase; part of the gene cluster that mediates the biosynthesis of squalestatin S1 (SQS1, also known as zaragozic acid A), a heavily oxidized fungal polyketide that offers potent cholesterol lowering activity by targeting squalene synthase (SS) (PubMed:27056201). SQS1 is composed of a 2,8-dioxobicyclic[3.2.1]octane-3,4,5-tricarboxyclic acid core that is connected to two lipophilic polyketide arms (PubMed:27056201). These initial steps feature the priming of an unusual benzoic acid starter unit onto the highly reducing polyketide synthase pks2, followed by oxaloacetate extension and product release to generate a tricarboxylic acid containing product (By similarity). The phenylalanine ammonia lyase (PAL) M7 and the acyl-CoA ligase M9 are involved in transforming phenylalanine into benzoyl-CoA (By similarity). The citrate synthase-like protein R3 is involved in connecting the C-alpha-carbons of the hexaketide chain and oxaloacetate to afford the tricarboxylic acid unit (By similarity). The potential hydrolytic enzymes, M8 and M10, are in close proximity to pks2 and may participate in product release (By similarity). On the other side, the tetraketide arm is synthesized by a the squalestatin tetraketide synthase pks1 and enzymatically esterified to the core in the last biosynthetic step, by the acetyltransferase M4 (PubMed:11251290, PubMed:15489970, PubMed:28106181). The biosynthesis of the tetraketide must involve 3 rounds of chain extension (PubMed:11251290, PubMed:15489970, PubMed:28106181). After the first and second rounds methyl-transfer occurs, and in all rounds of extension the ketoreductase and dehydratase are active (PubMed:11251290, PubMed:15489970, PubMed:28106181). The enoyl reductase and C-MeT of pks1 are not active in the final round of extension (PubMed:11251290, PubMed:15489970, PubMed:28106181). The acetyltransferase M4 appears to have a broad substrate selectivity for its acyl CoA substrate, allowing the in vitro synthesis of novel squalestatins (Probable). The biosynthesis of SQS1 requires several oxidative steps likely performed by oxidoreductases M1, R1 and R2 (Probable). Finally, in support of the identification of the cluster as being responsible for SQS1 production, the cluster contains a gene encoding a putative squalene synthase (SS) R6, suggesting a likely mechanism for self-resistance (Probable).</text>
</comment>
<comment type="pathway">
    <text evidence="10">Secondary metabolite biosynthesis.</text>
</comment>
<comment type="induction">
    <text evidence="6">Expression is induced on squalestatin S1-producing YMG medium.</text>
</comment>
<comment type="similarity">
    <text evidence="9">Belongs to the beta-lactamase family.</text>
</comment>
<gene>
    <name evidence="8" type="primary">M10</name>
</gene>
<accession>A0A3G1DJI3</accession>
<protein>
    <recommendedName>
        <fullName evidence="8">Probable hydrolase M10</fullName>
        <ecNumber evidence="8">3.5.-.-</ecNumber>
    </recommendedName>
    <alternativeName>
        <fullName evidence="8">Squalestatin S1 biosynthesis cluster protein M10</fullName>
    </alternativeName>
</protein>
<organism>
    <name type="scientific">Phoma sp. (strain ATCC 20986 / MF5453)</name>
    <dbReference type="NCBI Taxonomy" id="1828523"/>
    <lineage>
        <taxon>Eukaryota</taxon>
        <taxon>Fungi</taxon>
        <taxon>Dikarya</taxon>
        <taxon>Ascomycota</taxon>
        <taxon>Pezizomycotina</taxon>
        <taxon>Dothideomycetes</taxon>
        <taxon>Pleosporomycetidae</taxon>
        <taxon>Pleosporales</taxon>
        <taxon>Pleosporineae</taxon>
        <taxon>Didymellaceae</taxon>
        <taxon>Phoma</taxon>
    </lineage>
</organism>
<name>MFM10_PHOSM</name>
<reference key="1">
    <citation type="journal article" date="2016" name="Chem. Commun. (Camb.)">
        <title>Identification of genes encoding squalestatin S1 biosynthesis and in vitro production of new squalestatin analogues.</title>
        <authorList>
            <person name="Bonsch B."/>
            <person name="Belt V."/>
            <person name="Bartel C."/>
            <person name="Duensing N."/>
            <person name="Koziol M."/>
            <person name="Lazarus C.M."/>
            <person name="Bailey A.M."/>
            <person name="Simpson T.J."/>
            <person name="Cox R.J."/>
        </authorList>
    </citation>
    <scope>NUCLEOTIDE SEQUENCE [GENOMIC DNA]</scope>
    <scope>FUNCTION</scope>
    <scope>INDUCTION</scope>
</reference>
<reference key="2">
    <citation type="journal article" date="2001" name="Chem. Biol.">
        <title>Design and utility of oligonucleotide gene probes for fungal polyketide synthases.</title>
        <authorList>
            <person name="Nicholson T.P."/>
            <person name="Rudd B.A."/>
            <person name="Dawson M."/>
            <person name="Lazarus C.M."/>
            <person name="Simpson T.J."/>
            <person name="Cox R.J."/>
        </authorList>
    </citation>
    <scope>FUNCTION</scope>
</reference>
<reference key="3">
    <citation type="journal article" date="2004" name="Chem. Commun. (Camb.)">
        <title>Rapid cloning and expression of a fungal polyketide synthase gene involved in squalestatin biosynthesis.</title>
        <authorList>
            <person name="Cox R.J."/>
            <person name="Glod F."/>
            <person name="Hurley D."/>
            <person name="Lazarus C.M."/>
            <person name="Nicholson T.P."/>
            <person name="Rudd B.A."/>
            <person name="Simpson T.J."/>
            <person name="Wilkinson B."/>
            <person name="Zhang Y."/>
        </authorList>
    </citation>
    <scope>FUNCTION</scope>
</reference>
<reference key="4">
    <citation type="journal article" date="2017" name="Chem. Commun. (Camb.)">
        <title>In vitro kinetic study of the squalestatin tetraketide synthase dehydratase reveals the stereochemical course of a fungal highly reducing polyketide synthase.</title>
        <authorList>
            <person name="Liddle E."/>
            <person name="Scott A."/>
            <person name="Han L.C."/>
            <person name="Ivison D."/>
            <person name="Simpson T.J."/>
            <person name="Willis C.L."/>
            <person name="Cox R.J."/>
        </authorList>
    </citation>
    <scope>FUNCTION</scope>
</reference>
<feature type="signal peptide" evidence="2">
    <location>
        <begin position="1"/>
        <end position="23"/>
    </location>
</feature>
<feature type="chain" id="PRO_5018053437" description="Probable hydrolase M10">
    <location>
        <begin position="24"/>
        <end position="595"/>
    </location>
</feature>
<feature type="glycosylation site" description="N-linked (GlcNAc...) asparagine" evidence="3">
    <location>
        <position position="59"/>
    </location>
</feature>
<feature type="glycosylation site" description="N-linked (GlcNAc...) asparagine" evidence="3">
    <location>
        <position position="87"/>
    </location>
</feature>
<feature type="glycosylation site" description="N-linked (GlcNAc...) asparagine" evidence="3">
    <location>
        <position position="266"/>
    </location>
</feature>
<feature type="glycosylation site" description="N-linked (GlcNAc...) asparagine" evidence="3">
    <location>
        <position position="436"/>
    </location>
</feature>
<feature type="glycosylation site" description="N-linked (GlcNAc...) asparagine" evidence="3">
    <location>
        <position position="457"/>
    </location>
</feature>
<feature type="glycosylation site" description="N-linked (GlcNAc...) asparagine" evidence="3">
    <location>
        <position position="561"/>
    </location>
</feature>
<keyword id="KW-0325">Glycoprotein</keyword>
<keyword id="KW-0378">Hydrolase</keyword>
<keyword id="KW-0732">Signal</keyword>